<reference key="1">
    <citation type="journal article" date="2008" name="J. Bacteriol.">
        <title>Insights into the environmental resistance gene pool from the genome sequence of the multidrug-resistant environmental isolate Escherichia coli SMS-3-5.</title>
        <authorList>
            <person name="Fricke W.F."/>
            <person name="Wright M.S."/>
            <person name="Lindell A.H."/>
            <person name="Harkins D.M."/>
            <person name="Baker-Austin C."/>
            <person name="Ravel J."/>
            <person name="Stepanauskas R."/>
        </authorList>
    </citation>
    <scope>NUCLEOTIDE SEQUENCE [LARGE SCALE GENOMIC DNA]</scope>
    <source>
        <strain>SMS-3-5 / SECEC</strain>
    </source>
</reference>
<proteinExistence type="inferred from homology"/>
<protein>
    <recommendedName>
        <fullName evidence="1">Anaerobic glycerol-3-phosphate dehydrogenase subunit B</fullName>
        <shortName evidence="1">Anaerobic G-3-P dehydrogenase subunit B</shortName>
        <shortName evidence="1">Anaerobic G3Pdhase B</shortName>
        <ecNumber evidence="1">1.1.5.3</ecNumber>
    </recommendedName>
</protein>
<comment type="function">
    <text evidence="1">Conversion of glycerol 3-phosphate to dihydroxyacetone. Uses fumarate or nitrate as electron acceptor.</text>
</comment>
<comment type="catalytic activity">
    <reaction evidence="1">
        <text>a quinone + sn-glycerol 3-phosphate = dihydroxyacetone phosphate + a quinol</text>
        <dbReference type="Rhea" id="RHEA:18977"/>
        <dbReference type="ChEBI" id="CHEBI:24646"/>
        <dbReference type="ChEBI" id="CHEBI:57597"/>
        <dbReference type="ChEBI" id="CHEBI:57642"/>
        <dbReference type="ChEBI" id="CHEBI:132124"/>
        <dbReference type="EC" id="1.1.5.3"/>
    </reaction>
</comment>
<comment type="cofactor">
    <cofactor evidence="1">
        <name>FMN</name>
        <dbReference type="ChEBI" id="CHEBI:58210"/>
    </cofactor>
</comment>
<comment type="pathway">
    <text evidence="1">Polyol metabolism; glycerol degradation via glycerol kinase pathway; glycerone phosphate from sn-glycerol 3-phosphate (anaerobic route): step 1/1.</text>
</comment>
<comment type="subunit">
    <text evidence="1">Composed of a catalytic GlpA/B dimer and of membrane bound GlpC.</text>
</comment>
<comment type="similarity">
    <text evidence="1">Belongs to the anaerobic G-3-P dehydrogenase subunit B family.</text>
</comment>
<feature type="chain" id="PRO_1000133362" description="Anaerobic glycerol-3-phosphate dehydrogenase subunit B">
    <location>
        <begin position="1"/>
        <end position="419"/>
    </location>
</feature>
<keyword id="KW-0285">Flavoprotein</keyword>
<keyword id="KW-0288">FMN</keyword>
<keyword id="KW-0560">Oxidoreductase</keyword>
<sequence>MRFDTVIMGGGLAGLLCGLQLQKHGLRCAIVTRGQSALHFSSGSLDLLSHLPDGQPVTDIHSGLESLRQQAPAHPYTLLGPQRVLDLACQAQALIAESGAQLQGSVELAHQRVTPLGTLRSTWLSAPEVPVWPLPAKKICVVGISGLMDFQAHLAAASLRELDLAVETAEIELPELDVLRNNATEFRAVNIARFLDNEENWPLLLDALIPVANTCEMILMPACFGLADDKLWHWLNEKLPCSLMLLPTLPPSVLGIRLQNQLQRQFVRQGGVWMPGDEVKKVTCKNGVVNEIWTRNHADIPLRPRFAVLASGSFFSGGLVAERNGIREPILGLDVLQTATRGEWYKGDFFAPQPWQQFGVTTDEALRPSQAGQTIENLFAIGSVLGGFDPIAQGCGGGVCAVSALHAAQQIAQRAGGQQ</sequence>
<gene>
    <name evidence="1" type="primary">glpB</name>
    <name type="ordered locus">EcSMS35_2394</name>
</gene>
<dbReference type="EC" id="1.1.5.3" evidence="1"/>
<dbReference type="EMBL" id="CP000970">
    <property type="protein sequence ID" value="ACB17360.1"/>
    <property type="molecule type" value="Genomic_DNA"/>
</dbReference>
<dbReference type="RefSeq" id="WP_001209943.1">
    <property type="nucleotide sequence ID" value="NC_010498.1"/>
</dbReference>
<dbReference type="KEGG" id="ecm:EcSMS35_2394"/>
<dbReference type="HOGENOM" id="CLU_047793_0_0_6"/>
<dbReference type="UniPathway" id="UPA00618">
    <property type="reaction ID" value="UER00673"/>
</dbReference>
<dbReference type="Proteomes" id="UP000007011">
    <property type="component" value="Chromosome"/>
</dbReference>
<dbReference type="GO" id="GO:0009331">
    <property type="term" value="C:glycerol-3-phosphate dehydrogenase (FAD) complex"/>
    <property type="evidence" value="ECO:0007669"/>
    <property type="project" value="InterPro"/>
</dbReference>
<dbReference type="GO" id="GO:0004368">
    <property type="term" value="F:glycerol-3-phosphate dehydrogenase (quinone) activity"/>
    <property type="evidence" value="ECO:0007669"/>
    <property type="project" value="UniProtKB-UniRule"/>
</dbReference>
<dbReference type="GO" id="GO:0009061">
    <property type="term" value="P:anaerobic respiration"/>
    <property type="evidence" value="ECO:0007669"/>
    <property type="project" value="TreeGrafter"/>
</dbReference>
<dbReference type="GO" id="GO:0019563">
    <property type="term" value="P:glycerol catabolic process"/>
    <property type="evidence" value="ECO:0007669"/>
    <property type="project" value="UniProtKB-UniRule"/>
</dbReference>
<dbReference type="GO" id="GO:0046168">
    <property type="term" value="P:glycerol-3-phosphate catabolic process"/>
    <property type="evidence" value="ECO:0007669"/>
    <property type="project" value="TreeGrafter"/>
</dbReference>
<dbReference type="Gene3D" id="3.50.50.60">
    <property type="entry name" value="FAD/NAD(P)-binding domain"/>
    <property type="match status" value="1"/>
</dbReference>
<dbReference type="HAMAP" id="MF_00753">
    <property type="entry name" value="Glycerol3P_GlpB"/>
    <property type="match status" value="1"/>
</dbReference>
<dbReference type="InterPro" id="IPR003953">
    <property type="entry name" value="FAD-dep_OxRdtase_2_FAD-bd"/>
</dbReference>
<dbReference type="InterPro" id="IPR050315">
    <property type="entry name" value="FAD-oxidoreductase_2"/>
</dbReference>
<dbReference type="InterPro" id="IPR036188">
    <property type="entry name" value="FAD/NAD-bd_sf"/>
</dbReference>
<dbReference type="InterPro" id="IPR009158">
    <property type="entry name" value="G3P_DH_GlpB_su"/>
</dbReference>
<dbReference type="NCBIfam" id="TIGR03378">
    <property type="entry name" value="glycerol3P_GlpB"/>
    <property type="match status" value="1"/>
</dbReference>
<dbReference type="NCBIfam" id="NF003718">
    <property type="entry name" value="PRK05329.1-1"/>
    <property type="match status" value="1"/>
</dbReference>
<dbReference type="NCBIfam" id="NF003719">
    <property type="entry name" value="PRK05329.1-2"/>
    <property type="match status" value="1"/>
</dbReference>
<dbReference type="NCBIfam" id="NF003720">
    <property type="entry name" value="PRK05329.1-3"/>
    <property type="match status" value="1"/>
</dbReference>
<dbReference type="NCBIfam" id="NF003721">
    <property type="entry name" value="PRK05329.1-4"/>
    <property type="match status" value="1"/>
</dbReference>
<dbReference type="PANTHER" id="PTHR43400:SF11">
    <property type="entry name" value="ANAEROBIC GLYCEROL-3-PHOSPHATE DEHYDROGENASE SUBUNIT B"/>
    <property type="match status" value="1"/>
</dbReference>
<dbReference type="PANTHER" id="PTHR43400">
    <property type="entry name" value="FUMARATE REDUCTASE"/>
    <property type="match status" value="1"/>
</dbReference>
<dbReference type="Pfam" id="PF00890">
    <property type="entry name" value="FAD_binding_2"/>
    <property type="match status" value="1"/>
</dbReference>
<dbReference type="PIRSF" id="PIRSF000141">
    <property type="entry name" value="Anaerobic_G3P_dh"/>
    <property type="match status" value="1"/>
</dbReference>
<dbReference type="SUPFAM" id="SSF51905">
    <property type="entry name" value="FAD/NAD(P)-binding domain"/>
    <property type="match status" value="1"/>
</dbReference>
<evidence type="ECO:0000255" key="1">
    <source>
        <dbReference type="HAMAP-Rule" id="MF_00753"/>
    </source>
</evidence>
<accession>B1LLJ4</accession>
<name>GLPB_ECOSM</name>
<organism>
    <name type="scientific">Escherichia coli (strain SMS-3-5 / SECEC)</name>
    <dbReference type="NCBI Taxonomy" id="439855"/>
    <lineage>
        <taxon>Bacteria</taxon>
        <taxon>Pseudomonadati</taxon>
        <taxon>Pseudomonadota</taxon>
        <taxon>Gammaproteobacteria</taxon>
        <taxon>Enterobacterales</taxon>
        <taxon>Enterobacteriaceae</taxon>
        <taxon>Escherichia</taxon>
    </lineage>
</organism>